<protein>
    <recommendedName>
        <fullName evidence="1">Lipoyl synthase</fullName>
        <ecNumber evidence="1">2.8.1.8</ecNumber>
    </recommendedName>
    <alternativeName>
        <fullName evidence="1">Lip-syn</fullName>
        <shortName evidence="1">LS</shortName>
    </alternativeName>
    <alternativeName>
        <fullName evidence="1">Lipoate synthase</fullName>
    </alternativeName>
    <alternativeName>
        <fullName evidence="1">Lipoic acid synthase</fullName>
    </alternativeName>
    <alternativeName>
        <fullName evidence="1">Sulfur insertion protein LipA</fullName>
    </alternativeName>
</protein>
<dbReference type="EC" id="2.8.1.8" evidence="1"/>
<dbReference type="EMBL" id="CP000908">
    <property type="protein sequence ID" value="ABY31190.1"/>
    <property type="molecule type" value="Genomic_DNA"/>
</dbReference>
<dbReference type="RefSeq" id="WP_012254153.1">
    <property type="nucleotide sequence ID" value="NC_010172.1"/>
</dbReference>
<dbReference type="SMR" id="A9W6I4"/>
<dbReference type="KEGG" id="mex:Mext_2799"/>
<dbReference type="eggNOG" id="COG0320">
    <property type="taxonomic scope" value="Bacteria"/>
</dbReference>
<dbReference type="HOGENOM" id="CLU_033144_2_1_5"/>
<dbReference type="BioCyc" id="MEXT419610:MEXT_RS14115-MONOMER"/>
<dbReference type="UniPathway" id="UPA00538">
    <property type="reaction ID" value="UER00593"/>
</dbReference>
<dbReference type="GO" id="GO:0005737">
    <property type="term" value="C:cytoplasm"/>
    <property type="evidence" value="ECO:0007669"/>
    <property type="project" value="UniProtKB-SubCell"/>
</dbReference>
<dbReference type="GO" id="GO:0051539">
    <property type="term" value="F:4 iron, 4 sulfur cluster binding"/>
    <property type="evidence" value="ECO:0007669"/>
    <property type="project" value="UniProtKB-UniRule"/>
</dbReference>
<dbReference type="GO" id="GO:0016992">
    <property type="term" value="F:lipoate synthase activity"/>
    <property type="evidence" value="ECO:0007669"/>
    <property type="project" value="UniProtKB-UniRule"/>
</dbReference>
<dbReference type="GO" id="GO:0046872">
    <property type="term" value="F:metal ion binding"/>
    <property type="evidence" value="ECO:0007669"/>
    <property type="project" value="UniProtKB-KW"/>
</dbReference>
<dbReference type="CDD" id="cd01335">
    <property type="entry name" value="Radical_SAM"/>
    <property type="match status" value="1"/>
</dbReference>
<dbReference type="FunFam" id="3.20.20.70:FF:000186">
    <property type="entry name" value="Lipoyl synthase"/>
    <property type="match status" value="1"/>
</dbReference>
<dbReference type="Gene3D" id="3.20.20.70">
    <property type="entry name" value="Aldolase class I"/>
    <property type="match status" value="1"/>
</dbReference>
<dbReference type="HAMAP" id="MF_00206">
    <property type="entry name" value="Lipoyl_synth"/>
    <property type="match status" value="1"/>
</dbReference>
<dbReference type="InterPro" id="IPR013785">
    <property type="entry name" value="Aldolase_TIM"/>
</dbReference>
<dbReference type="InterPro" id="IPR006638">
    <property type="entry name" value="Elp3/MiaA/NifB-like_rSAM"/>
</dbReference>
<dbReference type="InterPro" id="IPR003698">
    <property type="entry name" value="Lipoyl_synth"/>
</dbReference>
<dbReference type="InterPro" id="IPR007197">
    <property type="entry name" value="rSAM"/>
</dbReference>
<dbReference type="NCBIfam" id="TIGR00510">
    <property type="entry name" value="lipA"/>
    <property type="match status" value="1"/>
</dbReference>
<dbReference type="NCBIfam" id="NF004019">
    <property type="entry name" value="PRK05481.1"/>
    <property type="match status" value="1"/>
</dbReference>
<dbReference type="NCBIfam" id="NF009544">
    <property type="entry name" value="PRK12928.1"/>
    <property type="match status" value="1"/>
</dbReference>
<dbReference type="PANTHER" id="PTHR10949">
    <property type="entry name" value="LIPOYL SYNTHASE"/>
    <property type="match status" value="1"/>
</dbReference>
<dbReference type="PANTHER" id="PTHR10949:SF0">
    <property type="entry name" value="LIPOYL SYNTHASE, MITOCHONDRIAL"/>
    <property type="match status" value="1"/>
</dbReference>
<dbReference type="Pfam" id="PF04055">
    <property type="entry name" value="Radical_SAM"/>
    <property type="match status" value="1"/>
</dbReference>
<dbReference type="PIRSF" id="PIRSF005963">
    <property type="entry name" value="Lipoyl_synth"/>
    <property type="match status" value="1"/>
</dbReference>
<dbReference type="SFLD" id="SFLDF00271">
    <property type="entry name" value="lipoyl_synthase"/>
    <property type="match status" value="1"/>
</dbReference>
<dbReference type="SFLD" id="SFLDG01058">
    <property type="entry name" value="lipoyl_synthase_like"/>
    <property type="match status" value="1"/>
</dbReference>
<dbReference type="SMART" id="SM00729">
    <property type="entry name" value="Elp3"/>
    <property type="match status" value="1"/>
</dbReference>
<dbReference type="SUPFAM" id="SSF102114">
    <property type="entry name" value="Radical SAM enzymes"/>
    <property type="match status" value="1"/>
</dbReference>
<dbReference type="PROSITE" id="PS51918">
    <property type="entry name" value="RADICAL_SAM"/>
    <property type="match status" value="1"/>
</dbReference>
<organism>
    <name type="scientific">Methylorubrum extorquens (strain PA1)</name>
    <name type="common">Methylobacterium extorquens</name>
    <dbReference type="NCBI Taxonomy" id="419610"/>
    <lineage>
        <taxon>Bacteria</taxon>
        <taxon>Pseudomonadati</taxon>
        <taxon>Pseudomonadota</taxon>
        <taxon>Alphaproteobacteria</taxon>
        <taxon>Hyphomicrobiales</taxon>
        <taxon>Methylobacteriaceae</taxon>
        <taxon>Methylorubrum</taxon>
    </lineage>
</organism>
<accession>A9W6I4</accession>
<name>LIPA_METEP</name>
<comment type="function">
    <text evidence="1">Catalyzes the radical-mediated insertion of two sulfur atoms into the C-6 and C-8 positions of the octanoyl moiety bound to the lipoyl domains of lipoate-dependent enzymes, thereby converting the octanoylated domains into lipoylated derivatives.</text>
</comment>
<comment type="catalytic activity">
    <reaction evidence="1">
        <text>[[Fe-S] cluster scaffold protein carrying a second [4Fe-4S](2+) cluster] + N(6)-octanoyl-L-lysyl-[protein] + 2 oxidized [2Fe-2S]-[ferredoxin] + 2 S-adenosyl-L-methionine + 4 H(+) = [[Fe-S] cluster scaffold protein] + N(6)-[(R)-dihydrolipoyl]-L-lysyl-[protein] + 4 Fe(3+) + 2 hydrogen sulfide + 2 5'-deoxyadenosine + 2 L-methionine + 2 reduced [2Fe-2S]-[ferredoxin]</text>
        <dbReference type="Rhea" id="RHEA:16585"/>
        <dbReference type="Rhea" id="RHEA-COMP:9928"/>
        <dbReference type="Rhea" id="RHEA-COMP:10000"/>
        <dbReference type="Rhea" id="RHEA-COMP:10001"/>
        <dbReference type="Rhea" id="RHEA-COMP:10475"/>
        <dbReference type="Rhea" id="RHEA-COMP:14568"/>
        <dbReference type="Rhea" id="RHEA-COMP:14569"/>
        <dbReference type="ChEBI" id="CHEBI:15378"/>
        <dbReference type="ChEBI" id="CHEBI:17319"/>
        <dbReference type="ChEBI" id="CHEBI:29034"/>
        <dbReference type="ChEBI" id="CHEBI:29919"/>
        <dbReference type="ChEBI" id="CHEBI:33722"/>
        <dbReference type="ChEBI" id="CHEBI:33737"/>
        <dbReference type="ChEBI" id="CHEBI:33738"/>
        <dbReference type="ChEBI" id="CHEBI:57844"/>
        <dbReference type="ChEBI" id="CHEBI:59789"/>
        <dbReference type="ChEBI" id="CHEBI:78809"/>
        <dbReference type="ChEBI" id="CHEBI:83100"/>
        <dbReference type="EC" id="2.8.1.8"/>
    </reaction>
</comment>
<comment type="cofactor">
    <cofactor evidence="1">
        <name>[4Fe-4S] cluster</name>
        <dbReference type="ChEBI" id="CHEBI:49883"/>
    </cofactor>
    <text evidence="1">Binds 2 [4Fe-4S] clusters per subunit. One cluster is coordinated with 3 cysteines and an exchangeable S-adenosyl-L-methionine.</text>
</comment>
<comment type="pathway">
    <text evidence="1">Protein modification; protein lipoylation via endogenous pathway; protein N(6)-(lipoyl)lysine from octanoyl-[acyl-carrier-protein]: step 2/2.</text>
</comment>
<comment type="subcellular location">
    <subcellularLocation>
        <location evidence="1">Cytoplasm</location>
    </subcellularLocation>
</comment>
<comment type="similarity">
    <text evidence="1">Belongs to the radical SAM superfamily. Lipoyl synthase family.</text>
</comment>
<proteinExistence type="inferred from homology"/>
<reference key="1">
    <citation type="submission" date="2007-12" db="EMBL/GenBank/DDBJ databases">
        <title>Complete sequence of Methylobacterium extorquens PA1.</title>
        <authorList>
            <consortium name="US DOE Joint Genome Institute"/>
            <person name="Copeland A."/>
            <person name="Lucas S."/>
            <person name="Lapidus A."/>
            <person name="Barry K."/>
            <person name="Glavina del Rio T."/>
            <person name="Dalin E."/>
            <person name="Tice H."/>
            <person name="Pitluck S."/>
            <person name="Saunders E."/>
            <person name="Brettin T."/>
            <person name="Bruce D."/>
            <person name="Detter J.C."/>
            <person name="Han C."/>
            <person name="Schmutz J."/>
            <person name="Larimer F."/>
            <person name="Land M."/>
            <person name="Hauser L."/>
            <person name="Kyrpides N."/>
            <person name="Kim E."/>
            <person name="Marx C."/>
            <person name="Richardson P."/>
        </authorList>
    </citation>
    <scope>NUCLEOTIDE SEQUENCE [LARGE SCALE GENOMIC DNA]</scope>
    <source>
        <strain>PA1</strain>
    </source>
</reference>
<feature type="chain" id="PRO_1000099611" description="Lipoyl synthase">
    <location>
        <begin position="1"/>
        <end position="339"/>
    </location>
</feature>
<feature type="domain" description="Radical SAM core" evidence="2">
    <location>
        <begin position="80"/>
        <end position="296"/>
    </location>
</feature>
<feature type="region of interest" description="Disordered" evidence="3">
    <location>
        <begin position="13"/>
        <end position="35"/>
    </location>
</feature>
<feature type="binding site" evidence="1">
    <location>
        <position position="68"/>
    </location>
    <ligand>
        <name>[4Fe-4S] cluster</name>
        <dbReference type="ChEBI" id="CHEBI:49883"/>
        <label>1</label>
    </ligand>
</feature>
<feature type="binding site" evidence="1">
    <location>
        <position position="73"/>
    </location>
    <ligand>
        <name>[4Fe-4S] cluster</name>
        <dbReference type="ChEBI" id="CHEBI:49883"/>
        <label>1</label>
    </ligand>
</feature>
<feature type="binding site" evidence="1">
    <location>
        <position position="79"/>
    </location>
    <ligand>
        <name>[4Fe-4S] cluster</name>
        <dbReference type="ChEBI" id="CHEBI:49883"/>
        <label>1</label>
    </ligand>
</feature>
<feature type="binding site" evidence="1">
    <location>
        <position position="94"/>
    </location>
    <ligand>
        <name>[4Fe-4S] cluster</name>
        <dbReference type="ChEBI" id="CHEBI:49883"/>
        <label>2</label>
        <note>4Fe-4S-S-AdoMet</note>
    </ligand>
</feature>
<feature type="binding site" evidence="1">
    <location>
        <position position="98"/>
    </location>
    <ligand>
        <name>[4Fe-4S] cluster</name>
        <dbReference type="ChEBI" id="CHEBI:49883"/>
        <label>2</label>
        <note>4Fe-4S-S-AdoMet</note>
    </ligand>
</feature>
<feature type="binding site" evidence="1">
    <location>
        <position position="101"/>
    </location>
    <ligand>
        <name>[4Fe-4S] cluster</name>
        <dbReference type="ChEBI" id="CHEBI:49883"/>
        <label>2</label>
        <note>4Fe-4S-S-AdoMet</note>
    </ligand>
</feature>
<feature type="binding site" evidence="1">
    <location>
        <position position="307"/>
    </location>
    <ligand>
        <name>[4Fe-4S] cluster</name>
        <dbReference type="ChEBI" id="CHEBI:49883"/>
        <label>1</label>
    </ligand>
</feature>
<evidence type="ECO:0000255" key="1">
    <source>
        <dbReference type="HAMAP-Rule" id="MF_00206"/>
    </source>
</evidence>
<evidence type="ECO:0000255" key="2">
    <source>
        <dbReference type="PROSITE-ProRule" id="PRU01266"/>
    </source>
</evidence>
<evidence type="ECO:0000256" key="3">
    <source>
        <dbReference type="SAM" id="MobiDB-lite"/>
    </source>
</evidence>
<keyword id="KW-0004">4Fe-4S</keyword>
<keyword id="KW-0963">Cytoplasm</keyword>
<keyword id="KW-0408">Iron</keyword>
<keyword id="KW-0411">Iron-sulfur</keyword>
<keyword id="KW-0479">Metal-binding</keyword>
<keyword id="KW-0949">S-adenosyl-L-methionine</keyword>
<keyword id="KW-0808">Transferase</keyword>
<gene>
    <name evidence="1" type="primary">lipA</name>
    <name type="ordered locus">Mext_2799</name>
</gene>
<sequence>MAVVLDLLNKDTRPKLDAPARPRHPEKAHRPDTAIQRKPDWIRVKAPGSKLWAETKDIVRANNLVTVCEEAGCPNIGECWEKRHATFMIMGDTCTRACSFCNVRTGLPAALDEAEPEKVAEAVAKLGLHHVVVTSVDRDDLKDGGAEHFSRTIVAIRRASPGTTVEILTPDFLRKPGALEVVVAAKPDVFNHNMETVPGKYVTVRPGARYFHSVRLLQRVKELDPTIFTKSGIMVGLGEERNEVVQLMDDLRSAEVDFLTIGQYLQPTRKHHEVVRFVPPDEFKAYETTAYAKGFLLVSATPLTRSSHHAGEDFARLKAARLAKLGPAPVAASIRAVNA</sequence>